<dbReference type="EMBL" id="AJ245878">
    <property type="protein sequence ID" value="CAB52709.1"/>
    <property type="molecule type" value="mRNA"/>
</dbReference>
<dbReference type="RefSeq" id="NP_001392429.1">
    <property type="nucleotide sequence ID" value="NM_001405500.1"/>
</dbReference>
<dbReference type="SMR" id="Q9ST58"/>
<dbReference type="STRING" id="4565.Q9ST58"/>
<dbReference type="Allergome" id="5724">
    <property type="allergen name" value="Tri a 33"/>
</dbReference>
<dbReference type="MEROPS" id="I04.032"/>
<dbReference type="EnsemblPlants" id="TraesCS5A02G359700.1">
    <property type="protein sequence ID" value="TraesCS5A02G359700.1"/>
    <property type="gene ID" value="TraesCS5A02G359700"/>
</dbReference>
<dbReference type="EnsemblPlants" id="TraesCS5A03G0863800.1">
    <property type="protein sequence ID" value="TraesCS5A03G0863800.1.CDS"/>
    <property type="gene ID" value="TraesCS5A03G0863800"/>
</dbReference>
<dbReference type="EnsemblPlants" id="TraesNOR5A03G02742630.1">
    <property type="protein sequence ID" value="TraesNOR5A03G02742630.1"/>
    <property type="gene ID" value="TraesNOR5A03G02742630"/>
</dbReference>
<dbReference type="EnsemblPlants" id="TraesSTA5A03G02710210.1">
    <property type="protein sequence ID" value="TraesSTA5A03G02710210.1"/>
    <property type="gene ID" value="TraesSTA5A03G02710210"/>
</dbReference>
<dbReference type="GeneID" id="542985"/>
<dbReference type="Gramene" id="TraesCS5A02G359700.1">
    <property type="protein sequence ID" value="TraesCS5A02G359700.1"/>
    <property type="gene ID" value="TraesCS5A02G359700"/>
</dbReference>
<dbReference type="Gramene" id="TraesCS5A03G0863800.1">
    <property type="protein sequence ID" value="TraesCS5A03G0863800.1.CDS"/>
    <property type="gene ID" value="TraesCS5A03G0863800"/>
</dbReference>
<dbReference type="Gramene" id="TraesNOR5A03G02742630.1">
    <property type="protein sequence ID" value="TraesNOR5A03G02742630.1"/>
    <property type="gene ID" value="TraesNOR5A03G02742630"/>
</dbReference>
<dbReference type="Gramene" id="TraesSTA5A03G02710210.1">
    <property type="protein sequence ID" value="TraesSTA5A03G02710210.1"/>
    <property type="gene ID" value="TraesSTA5A03G02710210"/>
</dbReference>
<dbReference type="OMA" id="FKATWEH"/>
<dbReference type="OrthoDB" id="1063785at2759"/>
<dbReference type="Proteomes" id="UP000019116">
    <property type="component" value="Chromosome 5A"/>
</dbReference>
<dbReference type="ExpressionAtlas" id="Q9ST58">
    <property type="expression patterns" value="baseline"/>
</dbReference>
<dbReference type="GO" id="GO:0005615">
    <property type="term" value="C:extracellular space"/>
    <property type="evidence" value="ECO:0000318"/>
    <property type="project" value="GO_Central"/>
</dbReference>
<dbReference type="GO" id="GO:0004867">
    <property type="term" value="F:serine-type endopeptidase inhibitor activity"/>
    <property type="evidence" value="ECO:0007669"/>
    <property type="project" value="UniProtKB-KW"/>
</dbReference>
<dbReference type="CDD" id="cd02043">
    <property type="entry name" value="serpinP_plants"/>
    <property type="match status" value="1"/>
</dbReference>
<dbReference type="Gene3D" id="2.30.39.10">
    <property type="entry name" value="Alpha-1-antitrypsin, domain 1"/>
    <property type="match status" value="1"/>
</dbReference>
<dbReference type="Gene3D" id="3.30.497.10">
    <property type="entry name" value="Antithrombin, subunit I, domain 2"/>
    <property type="match status" value="1"/>
</dbReference>
<dbReference type="InterPro" id="IPR023795">
    <property type="entry name" value="Serpin_CS"/>
</dbReference>
<dbReference type="InterPro" id="IPR023796">
    <property type="entry name" value="Serpin_dom"/>
</dbReference>
<dbReference type="InterPro" id="IPR000215">
    <property type="entry name" value="Serpin_fam"/>
</dbReference>
<dbReference type="InterPro" id="IPR036186">
    <property type="entry name" value="Serpin_sf"/>
</dbReference>
<dbReference type="InterPro" id="IPR042178">
    <property type="entry name" value="Serpin_sf_1"/>
</dbReference>
<dbReference type="InterPro" id="IPR042185">
    <property type="entry name" value="Serpin_sf_2"/>
</dbReference>
<dbReference type="PANTHER" id="PTHR11461">
    <property type="entry name" value="SERINE PROTEASE INHIBITOR, SERPIN"/>
    <property type="match status" value="1"/>
</dbReference>
<dbReference type="PANTHER" id="PTHR11461:SF317">
    <property type="entry name" value="SERPIN-Z1C"/>
    <property type="match status" value="1"/>
</dbReference>
<dbReference type="Pfam" id="PF00079">
    <property type="entry name" value="Serpin"/>
    <property type="match status" value="1"/>
</dbReference>
<dbReference type="SMART" id="SM00093">
    <property type="entry name" value="SERPIN"/>
    <property type="match status" value="1"/>
</dbReference>
<dbReference type="SUPFAM" id="SSF56574">
    <property type="entry name" value="Serpins"/>
    <property type="match status" value="1"/>
</dbReference>
<dbReference type="PROSITE" id="PS00284">
    <property type="entry name" value="SERPIN"/>
    <property type="match status" value="1"/>
</dbReference>
<organism>
    <name type="scientific">Triticum aestivum</name>
    <name type="common">Wheat</name>
    <dbReference type="NCBI Taxonomy" id="4565"/>
    <lineage>
        <taxon>Eukaryota</taxon>
        <taxon>Viridiplantae</taxon>
        <taxon>Streptophyta</taxon>
        <taxon>Embryophyta</taxon>
        <taxon>Tracheophyta</taxon>
        <taxon>Spermatophyta</taxon>
        <taxon>Magnoliopsida</taxon>
        <taxon>Liliopsida</taxon>
        <taxon>Poales</taxon>
        <taxon>Poaceae</taxon>
        <taxon>BOP clade</taxon>
        <taxon>Pooideae</taxon>
        <taxon>Triticodae</taxon>
        <taxon>Triticeae</taxon>
        <taxon>Triticinae</taxon>
        <taxon>Triticum</taxon>
    </lineage>
</organism>
<name>SPZ1C_WHEAT</name>
<comment type="function">
    <text evidence="2">Inhibits chymotrypsin and cathepsin G in vitro.</text>
</comment>
<comment type="domain">
    <text evidence="1">The reactive center loop (RCL) extends out from the body of the protein and directs binding to the target protease. The protease cleaves the serpin at the reactive site within the RCL, establishing a covalent linkage between the carboxyl group of the serpin reactive site and the serine hydroxyl of the protease. The resulting inactive serpin-protease complex is highly stable (By similarity).</text>
</comment>
<comment type="similarity">
    <text evidence="3">Belongs to the serpin family.</text>
</comment>
<sequence length="398" mass="42882">MATTLATDVRLSIAHQTRFALRLASTISSNPKSAASNAVFSPVSLHVALSLLAAGAGSATRDQLVATLGTGEVEGLHALAEQVVQFVLADASSAGGPHVAFANGVFVDASLPLKPSFQELAVCKYKADTQSVDFQTKAAEVATQVNSWVEKVTSGRIKDILPSGSVDNTTKLVLANALYFKGAWTDQFDSSGTKNDYFYLPDGSSVQTPFMSSMDDQYLSSSDGLKVLKLPYKQGGDKRQFSMYILLPEAPGGLSNLAEKLSAEPDFLERHIPRQRVALRQFKLPKFKISFETEASDLLKCLGLQLPFSNEADFSEMVDSPMAHGLRVSSVFHQAFVEVNEQGTEAAASTAIKMALLQARPPSVMDFIADHPFLFLLREDISGVVLFMGHVVNPLLSS</sequence>
<accession>Q9ST58</accession>
<protein>
    <recommendedName>
        <fullName>Serpin-Z1C</fullName>
    </recommendedName>
    <alternativeName>
        <fullName>TriaeZ1c</fullName>
    </alternativeName>
    <alternativeName>
        <fullName>WSZ1c</fullName>
    </alternativeName>
</protein>
<feature type="chain" id="PRO_0000334570" description="Serpin-Z1C">
    <location>
        <begin position="1"/>
        <end position="398"/>
    </location>
</feature>
<feature type="region of interest" description="RCL">
    <location>
        <begin position="343"/>
        <end position="367"/>
    </location>
</feature>
<feature type="site" description="Reactive bond">
    <location>
        <begin position="357"/>
        <end position="358"/>
    </location>
</feature>
<evidence type="ECO:0000250" key="1"/>
<evidence type="ECO:0000269" key="2">
    <source>
    </source>
</evidence>
<evidence type="ECO:0000305" key="3"/>
<reference key="1">
    <citation type="journal article" date="2000" name="J. Biol. Chem.">
        <title>Inhibitory serpins from wheat grain with reactive centers resembling glutamine-rich repeats of prolamin storage proteins. Cloning and characterization of five major molecular forms.</title>
        <authorList>
            <person name="Oestergaard H."/>
            <person name="Rasmussen S.K."/>
            <person name="Roberts T.H."/>
            <person name="Hejgaard J."/>
        </authorList>
    </citation>
    <scope>NUCLEOTIDE SEQUENCE [MRNA]</scope>
    <scope>PARTIAL PROTEIN SEQUENCE</scope>
    <scope>FUNCTION</scope>
    <source>
        <strain>cv. Chinese Spring</strain>
        <tissue>Grain</tissue>
    </source>
</reference>
<keyword id="KW-0903">Direct protein sequencing</keyword>
<keyword id="KW-0646">Protease inhibitor</keyword>
<keyword id="KW-1185">Reference proteome</keyword>
<keyword id="KW-0722">Serine protease inhibitor</keyword>
<proteinExistence type="evidence at protein level"/>